<evidence type="ECO:0000255" key="1">
    <source>
        <dbReference type="PROSITE-ProRule" id="PRU10102"/>
    </source>
</evidence>
<evidence type="ECO:0000269" key="2">
    <source>
    </source>
</evidence>
<evidence type="ECO:0000305" key="3"/>
<evidence type="ECO:0000305" key="4">
    <source>
    </source>
</evidence>
<evidence type="ECO:0000305" key="5">
    <source>
    </source>
</evidence>
<feature type="signal peptide">
    <location>
        <begin position="1"/>
        <end position="15"/>
    </location>
</feature>
<feature type="chain" id="PRO_0000016967" description="Beta-lactamase">
    <location>
        <begin position="16"/>
        <end position="313"/>
    </location>
</feature>
<feature type="active site" description="Acyl-ester intermediate" evidence="1">
    <location>
        <position position="190"/>
    </location>
</feature>
<protein>
    <recommendedName>
        <fullName>Beta-lactamase</fullName>
        <ecNumber>3.5.2.6</ecNumber>
    </recommendedName>
    <alternativeName>
        <fullName>Penicillinase</fullName>
    </alternativeName>
</protein>
<gene>
    <name type="primary">penA</name>
</gene>
<keyword id="KW-0046">Antibiotic resistance</keyword>
<keyword id="KW-0378">Hydrolase</keyword>
<keyword id="KW-0732">Signal</keyword>
<name>PENA_BURM1</name>
<organism>
    <name type="scientific">Burkholderia multivorans (strain ATCC 17616 / 249)</name>
    <dbReference type="NCBI Taxonomy" id="395019"/>
    <lineage>
        <taxon>Bacteria</taxon>
        <taxon>Pseudomonadati</taxon>
        <taxon>Pseudomonadota</taxon>
        <taxon>Betaproteobacteria</taxon>
        <taxon>Burkholderiales</taxon>
        <taxon>Burkholderiaceae</taxon>
        <taxon>Burkholderia</taxon>
        <taxon>Burkholderia cepacia complex</taxon>
    </lineage>
</organism>
<dbReference type="EC" id="3.5.2.6"/>
<dbReference type="EMBL" id="L02928">
    <property type="protein sequence ID" value="AAA25927.1"/>
    <property type="molecule type" value="Genomic_DNA"/>
</dbReference>
<dbReference type="PIR" id="A48903">
    <property type="entry name" value="A48903"/>
</dbReference>
<dbReference type="GO" id="GO:0030288">
    <property type="term" value="C:outer membrane-bounded periplasmic space"/>
    <property type="evidence" value="ECO:0007669"/>
    <property type="project" value="InterPro"/>
</dbReference>
<dbReference type="GO" id="GO:0008800">
    <property type="term" value="F:beta-lactamase activity"/>
    <property type="evidence" value="ECO:0007669"/>
    <property type="project" value="UniProtKB-EC"/>
</dbReference>
<dbReference type="GO" id="GO:0017001">
    <property type="term" value="P:antibiotic catabolic process"/>
    <property type="evidence" value="ECO:0007669"/>
    <property type="project" value="InterPro"/>
</dbReference>
<dbReference type="GO" id="GO:0046677">
    <property type="term" value="P:response to antibiotic"/>
    <property type="evidence" value="ECO:0007669"/>
    <property type="project" value="UniProtKB-KW"/>
</dbReference>
<dbReference type="InterPro" id="IPR001586">
    <property type="entry name" value="Beta-lactam_class-C_AS"/>
</dbReference>
<dbReference type="PROSITE" id="PS00336">
    <property type="entry name" value="BETA_LACTAMASE_C"/>
    <property type="match status" value="1"/>
</dbReference>
<comment type="function">
    <text evidence="5">Upon expression in E.coli enables the latter to utilize penicillin as a carbon source.</text>
</comment>
<comment type="catalytic activity">
    <reaction evidence="1">
        <text>a beta-lactam + H2O = a substituted beta-amino acid</text>
        <dbReference type="Rhea" id="RHEA:20401"/>
        <dbReference type="ChEBI" id="CHEBI:15377"/>
        <dbReference type="ChEBI" id="CHEBI:35627"/>
        <dbReference type="ChEBI" id="CHEBI:140347"/>
        <dbReference type="EC" id="3.5.2.6"/>
    </reaction>
</comment>
<comment type="induction">
    <text evidence="2">By penicillin G, impenem and AmpR.</text>
</comment>
<comment type="similarity">
    <text evidence="3">Belongs to the class-C beta-lactamase family.</text>
</comment>
<comment type="caution">
    <text evidence="4">This protein could be artifactual, it seems to contain pieces of several different proteins.</text>
</comment>
<accession>Q02940</accession>
<proteinExistence type="evidence at transcript level"/>
<sequence length="313" mass="34328">MQRIGVTDYTILGTVKGAELELVRFTHPFMGFDVPAILGDHVTRMPVPVPFTPRLPRPGRLCDRSEIRPGKPLTRLARTALICRALIRRWMARTSYSDSVNCHTQPISAIFDYKDLRFEPPSNRISPAGQTSVDRLLQLSQGQAVEGQSAVARLTGEKKNHPGAQYANRLSPRIANNHPATQQTLFELGSGAKERNAINVSYLTALGTPGFTLMLPARMLCGIVSDNNFTQKQLCPSPARCTRGPAEPAKRGPWLEPGLVIRKDGLRTGKLLSSLRGLCLTVLRFQPTVPCFCRLALSSSVAISSTGLVNFSR</sequence>
<reference key="1">
    <citation type="journal article" date="1993" name="Antimicrob. Agents Chemother.">
        <title>The Pseudomonas cepacia 249 chromosomal penicillinase is a member of the AmpC family of chromosomal beta-lactamases.</title>
        <authorList>
            <person name="Proenca R."/>
            <person name="Niu W.W."/>
            <person name="Cacalano G."/>
            <person name="Prince A."/>
        </authorList>
    </citation>
    <scope>NUCLEOTIDE SEQUENCE [GENOMIC DNA]</scope>
    <scope>INDUCTION</scope>
    <source>
        <strain>ATCC 17616 / 249</strain>
    </source>
</reference>
<reference key="2">
    <citation type="journal article" date="1994" name="Antimicrob. Agents Chemother.">
        <title>Analysis of the penA gene of Pseudomonas cepacia 249.</title>
        <authorList>
            <person name="Joris B."/>
            <person name="Galleni M."/>
            <person name="Frere J.M."/>
            <person name="Labia R."/>
        </authorList>
    </citation>
    <scope>COMMENT ON SEQUENCE</scope>
</reference>